<organism>
    <name type="scientific">Histophilus somni (strain 2336)</name>
    <name type="common">Haemophilus somnus</name>
    <dbReference type="NCBI Taxonomy" id="228400"/>
    <lineage>
        <taxon>Bacteria</taxon>
        <taxon>Pseudomonadati</taxon>
        <taxon>Pseudomonadota</taxon>
        <taxon>Gammaproteobacteria</taxon>
        <taxon>Pasteurellales</taxon>
        <taxon>Pasteurellaceae</taxon>
        <taxon>Histophilus</taxon>
    </lineage>
</organism>
<sequence>MRCPFCAMEETKVIDSRLVSDGYQVRRRRECGYCHERFTTFESAEVIVPKIIKNDGSREPFDEDKLRRGIQHALEKRPVSSDDVEKAISRIIYQLRATGERDVKSQDVGRLVMAELKELDKVAYIRFASVYLSFDDINQFTNEIEKLKD</sequence>
<reference key="1">
    <citation type="submission" date="2008-02" db="EMBL/GenBank/DDBJ databases">
        <title>Complete sequence of Haemophilus somnus 2336.</title>
        <authorList>
            <consortium name="US DOE Joint Genome Institute"/>
            <person name="Siddaramappa S."/>
            <person name="Duncan A.J."/>
            <person name="Challacombe J.F."/>
            <person name="Rainey D."/>
            <person name="Gillaspy A.F."/>
            <person name="Carson M."/>
            <person name="Gipson J."/>
            <person name="Gipson M."/>
            <person name="Bruce D."/>
            <person name="Detter J.C."/>
            <person name="Han C.S."/>
            <person name="Land M."/>
            <person name="Tapia R."/>
            <person name="Thompson L.S."/>
            <person name="Orvis J."/>
            <person name="Zaitshik J."/>
            <person name="Barnes G."/>
            <person name="Brettin T.S."/>
            <person name="Dyer D.W."/>
            <person name="Inzana T.J."/>
        </authorList>
    </citation>
    <scope>NUCLEOTIDE SEQUENCE [LARGE SCALE GENOMIC DNA]</scope>
    <source>
        <strain>2336</strain>
    </source>
</reference>
<evidence type="ECO:0000255" key="1">
    <source>
        <dbReference type="HAMAP-Rule" id="MF_00440"/>
    </source>
</evidence>
<feature type="chain" id="PRO_1000080756" description="Transcriptional repressor NrdR">
    <location>
        <begin position="1"/>
        <end position="149"/>
    </location>
</feature>
<feature type="domain" description="ATP-cone" evidence="1">
    <location>
        <begin position="49"/>
        <end position="139"/>
    </location>
</feature>
<feature type="zinc finger region" evidence="1">
    <location>
        <begin position="3"/>
        <end position="34"/>
    </location>
</feature>
<keyword id="KW-0067">ATP-binding</keyword>
<keyword id="KW-0238">DNA-binding</keyword>
<keyword id="KW-0479">Metal-binding</keyword>
<keyword id="KW-0547">Nucleotide-binding</keyword>
<keyword id="KW-0678">Repressor</keyword>
<keyword id="KW-0804">Transcription</keyword>
<keyword id="KW-0805">Transcription regulation</keyword>
<keyword id="KW-0862">Zinc</keyword>
<keyword id="KW-0863">Zinc-finger</keyword>
<dbReference type="EMBL" id="CP000947">
    <property type="protein sequence ID" value="ACA31291.1"/>
    <property type="molecule type" value="Genomic_DNA"/>
</dbReference>
<dbReference type="RefSeq" id="WP_011609206.1">
    <property type="nucleotide sequence ID" value="NC_010519.1"/>
</dbReference>
<dbReference type="SMR" id="B0UUR2"/>
<dbReference type="STRING" id="228400.HSM_1535"/>
<dbReference type="GeneID" id="31487838"/>
<dbReference type="KEGG" id="hsm:HSM_1535"/>
<dbReference type="HOGENOM" id="CLU_108412_0_0_6"/>
<dbReference type="GO" id="GO:0005524">
    <property type="term" value="F:ATP binding"/>
    <property type="evidence" value="ECO:0007669"/>
    <property type="project" value="UniProtKB-KW"/>
</dbReference>
<dbReference type="GO" id="GO:0003677">
    <property type="term" value="F:DNA binding"/>
    <property type="evidence" value="ECO:0007669"/>
    <property type="project" value="UniProtKB-KW"/>
</dbReference>
<dbReference type="GO" id="GO:0008270">
    <property type="term" value="F:zinc ion binding"/>
    <property type="evidence" value="ECO:0007669"/>
    <property type="project" value="UniProtKB-UniRule"/>
</dbReference>
<dbReference type="GO" id="GO:0045892">
    <property type="term" value="P:negative regulation of DNA-templated transcription"/>
    <property type="evidence" value="ECO:0007669"/>
    <property type="project" value="UniProtKB-UniRule"/>
</dbReference>
<dbReference type="HAMAP" id="MF_00440">
    <property type="entry name" value="NrdR"/>
    <property type="match status" value="1"/>
</dbReference>
<dbReference type="InterPro" id="IPR005144">
    <property type="entry name" value="ATP-cone_dom"/>
</dbReference>
<dbReference type="InterPro" id="IPR055173">
    <property type="entry name" value="NrdR-like_N"/>
</dbReference>
<dbReference type="InterPro" id="IPR003796">
    <property type="entry name" value="RNR_NrdR-like"/>
</dbReference>
<dbReference type="NCBIfam" id="TIGR00244">
    <property type="entry name" value="transcriptional regulator NrdR"/>
    <property type="match status" value="1"/>
</dbReference>
<dbReference type="PANTHER" id="PTHR30455">
    <property type="entry name" value="TRANSCRIPTIONAL REPRESSOR NRDR"/>
    <property type="match status" value="1"/>
</dbReference>
<dbReference type="PANTHER" id="PTHR30455:SF2">
    <property type="entry name" value="TRANSCRIPTIONAL REPRESSOR NRDR"/>
    <property type="match status" value="1"/>
</dbReference>
<dbReference type="Pfam" id="PF03477">
    <property type="entry name" value="ATP-cone"/>
    <property type="match status" value="1"/>
</dbReference>
<dbReference type="Pfam" id="PF22811">
    <property type="entry name" value="Zn_ribbon_NrdR"/>
    <property type="match status" value="1"/>
</dbReference>
<dbReference type="PROSITE" id="PS51161">
    <property type="entry name" value="ATP_CONE"/>
    <property type="match status" value="1"/>
</dbReference>
<protein>
    <recommendedName>
        <fullName evidence="1">Transcriptional repressor NrdR</fullName>
    </recommendedName>
</protein>
<comment type="function">
    <text evidence="1">Negatively regulates transcription of bacterial ribonucleotide reductase nrd genes and operons by binding to NrdR-boxes.</text>
</comment>
<comment type="cofactor">
    <cofactor evidence="1">
        <name>Zn(2+)</name>
        <dbReference type="ChEBI" id="CHEBI:29105"/>
    </cofactor>
    <text evidence="1">Binds 1 zinc ion.</text>
</comment>
<comment type="similarity">
    <text evidence="1">Belongs to the NrdR family.</text>
</comment>
<gene>
    <name evidence="1" type="primary">nrdR</name>
    <name type="ordered locus">HSM_1535</name>
</gene>
<accession>B0UUR2</accession>
<proteinExistence type="inferred from homology"/>
<name>NRDR_HISS2</name>